<name>PAX6_RAT</name>
<reference key="1">
    <citation type="journal article" date="2014" name="Gene">
        <title>Cloning, expression, and functional characterization of the rat Pax6 5a orthologous splicing variant.</title>
        <authorList>
            <person name="Wei F."/>
            <person name="Li M."/>
            <person name="Cheng S.Y."/>
            <person name="Wen L."/>
            <person name="Liu M.H."/>
            <person name="Shuai J."/>
        </authorList>
    </citation>
    <scope>NUCLEOTIDE SEQUENCE [MRNA] (ISOFORM 5A)</scope>
    <scope>SUBCELLULAR LOCATION</scope>
    <scope>DEVELOPMENTAL STAGE</scope>
    <scope>ALTERNATIVE SPLICING</scope>
    <source>
        <strain>Sprague-Dawley</strain>
        <tissue>Brain</tissue>
    </source>
</reference>
<reference key="2">
    <citation type="submission" date="1996-09" db="EMBL/GenBank/DDBJ databases">
        <title>Pax-6 is required for pancreatic islet development.</title>
        <authorList>
            <person name="Gimlich R."/>
            <person name="Arnold G.S."/>
            <person name="Wawersik S."/>
            <person name="Maas R."/>
            <person name="Wong G."/>
        </authorList>
    </citation>
    <scope>NUCLEOTIDE SEQUENCE [MRNA] (ISOFORM 1)</scope>
</reference>
<reference key="3">
    <citation type="submission" date="2004-02" db="EMBL/GenBank/DDBJ databases">
        <authorList>
            <person name="Karkour A."/>
            <person name="Wolf G.M."/>
            <person name="Walther R."/>
        </authorList>
    </citation>
    <scope>NUCLEOTIDE SEQUENCE [MRNA] (ISOFORM 5A)</scope>
    <source>
        <strain>New England Deaconess Hospital</strain>
        <strain>Sprague-Dawley</strain>
    </source>
</reference>
<reference key="4">
    <citation type="journal article" date="2004" name="Genome Res.">
        <title>The status, quality, and expansion of the NIH full-length cDNA project: the Mammalian Gene Collection (MGC).</title>
        <authorList>
            <consortium name="The MGC Project Team"/>
        </authorList>
    </citation>
    <scope>NUCLEOTIDE SEQUENCE [LARGE SCALE MRNA] (ISOFORM 1)</scope>
    <source>
        <tissue>Heart</tissue>
    </source>
</reference>
<reference key="5">
    <citation type="journal article" date="1993" name="Nat. Genet.">
        <title>A mutation in the Pax-6 gene in rat small eye is associated with impaired migration of midbrain crest cells.</title>
        <authorList>
            <person name="Matsuo T."/>
            <person name="Osumi-Yamashita N."/>
            <person name="Noji S."/>
            <person name="Ohuchi H."/>
            <person name="Koyama E."/>
            <person name="Myokai F."/>
            <person name="Matsuo N."/>
            <person name="Taniguchi S."/>
            <person name="Doi H."/>
            <person name="Iseki S."/>
            <person name="Ninomiya Y."/>
            <person name="Fujiwara M."/>
            <person name="Wantanabe T."/>
            <person name="Eto K."/>
        </authorList>
    </citation>
    <scope>PARTIAL NUCLEOTIDE SEQUENCE [MRNA]</scope>
    <scope>INVOLVEMENT IN SEY</scope>
    <source>
        <strain>Sprague-Dawley</strain>
        <tissue>Embryo</tissue>
    </source>
</reference>
<reference key="6">
    <citation type="journal article" date="2002" name="Development">
        <title>Pax6 regulates specification of ventral neurone subtypes in the hindbrain by establishing progenitor domains.</title>
        <authorList>
            <person name="Takahashi M."/>
            <person name="Osumi N."/>
        </authorList>
    </citation>
    <scope>FUNCTION</scope>
</reference>
<reference key="7">
    <citation type="journal article" date="2013" name="Folia Neuropathol.">
        <title>Transcription factor Pax6 is expressed by astroglia after transient brain ischemia in the rat model.</title>
        <authorList>
            <person name="Steliga A."/>
            <person name="Waskow M."/>
            <person name="Karwacki Z."/>
            <person name="Wojcik S."/>
            <person name="Lietzau G."/>
            <person name="Klejbor I."/>
            <person name="Kowianski P."/>
        </authorList>
    </citation>
    <scope>INDUCTION</scope>
</reference>
<accession>P63016</accession>
<accession>A1A5N7</accession>
<accession>P32117</accession>
<accession>P70601</accession>
<accession>Q62222</accession>
<accession>Q64037</accession>
<accession>Q6QHS5</accession>
<accession>Q701Q8</accession>
<feature type="chain" id="PRO_0000050187" description="Paired box protein Pax-6">
    <location>
        <begin position="1"/>
        <end position="422"/>
    </location>
</feature>
<feature type="DNA-binding region" description="Paired" evidence="4">
    <location>
        <begin position="4"/>
        <end position="130"/>
    </location>
</feature>
<feature type="DNA-binding region" description="Homeobox" evidence="3">
    <location>
        <begin position="210"/>
        <end position="269"/>
    </location>
</feature>
<feature type="region of interest" description="PAI subdomain" evidence="4">
    <location>
        <begin position="7"/>
        <end position="63"/>
    </location>
</feature>
<feature type="region of interest" description="RED subdomain" evidence="4">
    <location>
        <begin position="82"/>
        <end position="130"/>
    </location>
</feature>
<feature type="region of interest" description="Disordered" evidence="5">
    <location>
        <begin position="157"/>
        <end position="201"/>
    </location>
</feature>
<feature type="region of interest" description="Disordered" evidence="5">
    <location>
        <begin position="269"/>
        <end position="311"/>
    </location>
</feature>
<feature type="region of interest" description="Required for suppression of NFATC1-mediated transcription" evidence="2">
    <location>
        <begin position="345"/>
        <end position="422"/>
    </location>
</feature>
<feature type="compositionally biased region" description="Low complexity" evidence="5">
    <location>
        <begin position="170"/>
        <end position="184"/>
    </location>
</feature>
<feature type="compositionally biased region" description="Polar residues" evidence="5">
    <location>
        <begin position="185"/>
        <end position="194"/>
    </location>
</feature>
<feature type="compositionally biased region" description="Low complexity" evidence="5">
    <location>
        <begin position="281"/>
        <end position="294"/>
    </location>
</feature>
<feature type="splice variant" id="VSP_011531" description="In isoform 5a." evidence="8 11">
    <original>Q</original>
    <variation>QTHADAKVQVLDSEN</variation>
    <location>
        <position position="47"/>
    </location>
</feature>
<feature type="sequence conflict" description="In Ref. 2; CAF29075." evidence="12" ref="2">
    <original>R</original>
    <variation>C</variation>
    <location>
        <position position="159"/>
    </location>
</feature>
<feature type="sequence conflict" description="In Ref. 5; AAB32671." evidence="12" ref="5">
    <original>Q</original>
    <variation>G</variation>
    <location>
        <position position="183"/>
    </location>
</feature>
<sequence>MQNSHSGVNQLGGVFVNGRPLPDSTRQKIVELAHSGARPCDISRILQVSNGCVSKILGRYYETGSIRPRAIGGSKPRVATPEVVSKIAQYKRECPSIFAWEIRDRLLSEGVCTNDNIPSVSSINRVLRNLASEKQQMGADGMYDKLRMLNGQTGSWGTRPGWYPGTSVPGQPTQDGCQQQEGQGENTNSISSNGEDSDEAQMRLQLKRKLQRNRTSFTQEQIEALEKEFERTHYPDVFARERLAAKIDLPEARIQVWFSNRRAKWRREEKLRNQRRQASNTPSHIPISSSFSTSVYQPIPQPTTPVSSFTSGSMLGRTDTALTNTYSALPPMPSFTMANNLPMQPPVPSQTSSYSCMLPTSPSVNGRSYDTYTPPHMQTHMNSQPMGTSGTTSTGLISPGVSVPVQVPGSEPDMSQYWPRLQ</sequence>
<comment type="function">
    <text evidence="1 2 6">Transcription factor with important functions in the development of the eye, nose, central nervous system and pancreas. Required for the differentiation of pancreatic islet alpha cells. Competes with PAX4 in binding to a common element in the glucagon, insulin and somatostatin promoters (By similarity). Regulates specification of the ventral neuron subtypes by establishing the correct progenitor domains. Acts as a transcriptional repressor of NFATC1-mediated gene expression (By similarity).</text>
</comment>
<comment type="subunit">
    <text evidence="2">Interacts with MAF and MAFB (By similarity). Interacts with TRIM11; this interaction leads to ubiquitination and proteasomal degradation, as well as inhibition of transactivation, possibly in part by preventing PAX6 binding to consensus DNA sequences (By similarity). Interacts with TLE6/GRG6 (By similarity).</text>
</comment>
<comment type="subcellular location">
    <subcellularLocation>
        <location evidence="2">Nucleus</location>
    </subcellularLocation>
</comment>
<comment type="subcellular location">
    <molecule>Isoform 1</molecule>
    <subcellularLocation>
        <location evidence="3 4 8">Nucleus</location>
    </subcellularLocation>
</comment>
<comment type="subcellular location">
    <molecule>Isoform 5a</molecule>
    <subcellularLocation>
        <location evidence="8">Nucleus</location>
    </subcellularLocation>
</comment>
<comment type="alternative products">
    <event type="alternative splicing"/>
    <isoform>
        <id>P63016-1</id>
        <name>1</name>
        <sequence type="displayed"/>
    </isoform>
    <isoform>
        <id>P63016-2</id>
        <name>5a</name>
        <name evidence="10">Pax6-5a</name>
        <sequence type="described" ref="VSP_011531"/>
    </isoform>
</comment>
<comment type="developmental stage">
    <molecule>Isoform 1</molecule>
    <text evidence="8">Expressed in the embryonic headfolds and to a lesser extent in the trunk of neurula at 10 dpc.</text>
</comment>
<comment type="developmental stage">
    <molecule>Isoform 5a</molecule>
    <text evidence="8">Expressed in the embryonic headfolds and to a lesser extent in the trunk of neurula at 10 dpc.</text>
</comment>
<comment type="induction">
    <text evidence="7">Up-regulated in response to transient cerebral ischemia in cerebral cortex, striatum and subcortical white matter fibers in the ischemic region starting from 24 hours after initiating the ischemia.</text>
</comment>
<comment type="PTM">
    <text evidence="1">Ubiquitinated by TRIM11, leading to ubiquitination and proteasomal degradation.</text>
</comment>
<comment type="disease">
    <text evidence="9">Defects in Pax6 are the cause of a condition known as small eye (Sey) which results in the complete lack of eyes and nasal primordia.</text>
</comment>
<comment type="similarity">
    <text evidence="12">Belongs to the paired homeobox family.</text>
</comment>
<keyword id="KW-0025">Alternative splicing</keyword>
<keyword id="KW-0217">Developmental protein</keyword>
<keyword id="KW-0221">Differentiation</keyword>
<keyword id="KW-0238">DNA-binding</keyword>
<keyword id="KW-0371">Homeobox</keyword>
<keyword id="KW-0539">Nucleus</keyword>
<keyword id="KW-0563">Paired box</keyword>
<keyword id="KW-1185">Reference proteome</keyword>
<keyword id="KW-0804">Transcription</keyword>
<keyword id="KW-0805">Transcription regulation</keyword>
<keyword id="KW-0832">Ubl conjugation</keyword>
<dbReference type="EMBL" id="U69644">
    <property type="protein sequence ID" value="AAB09042.1"/>
    <property type="molecule type" value="mRNA"/>
</dbReference>
<dbReference type="EMBL" id="AJ627631">
    <property type="protein sequence ID" value="CAF29075.1"/>
    <property type="molecule type" value="mRNA"/>
</dbReference>
<dbReference type="EMBL" id="AY540905">
    <property type="protein sequence ID" value="AAS48919.1"/>
    <property type="molecule type" value="mRNA"/>
</dbReference>
<dbReference type="EMBL" id="AY540906">
    <property type="protein sequence ID" value="AAS48920.1"/>
    <property type="molecule type" value="mRNA"/>
</dbReference>
<dbReference type="EMBL" id="BC128741">
    <property type="protein sequence ID" value="AAI28742.1"/>
    <property type="molecule type" value="mRNA"/>
</dbReference>
<dbReference type="EMBL" id="S74393">
    <property type="protein sequence ID" value="AAB32671.1"/>
    <property type="status" value="ALT_TERM"/>
    <property type="molecule type" value="mRNA"/>
</dbReference>
<dbReference type="PIR" id="S36166">
    <property type="entry name" value="S36166"/>
</dbReference>
<dbReference type="RefSeq" id="NP_037133.1">
    <molecule id="P63016-1"/>
    <property type="nucleotide sequence ID" value="NM_013001.2"/>
</dbReference>
<dbReference type="RefSeq" id="XP_006234695.1">
    <molecule id="P63016-2"/>
    <property type="nucleotide sequence ID" value="XM_006234633.5"/>
</dbReference>
<dbReference type="RefSeq" id="XP_006234696.1">
    <property type="nucleotide sequence ID" value="XM_006234634.3"/>
</dbReference>
<dbReference type="RefSeq" id="XP_006234697.1">
    <property type="nucleotide sequence ID" value="XM_006234635.3"/>
</dbReference>
<dbReference type="RefSeq" id="XP_006234698.1">
    <property type="nucleotide sequence ID" value="XM_006234636.3"/>
</dbReference>
<dbReference type="RefSeq" id="XP_017446983.1">
    <property type="nucleotide sequence ID" value="XM_017591494.1"/>
</dbReference>
<dbReference type="RefSeq" id="XP_017446984.1">
    <property type="nucleotide sequence ID" value="XM_017591495.1"/>
</dbReference>
<dbReference type="RefSeq" id="XP_038960304.1">
    <molecule id="P63016-2"/>
    <property type="nucleotide sequence ID" value="XM_039104376.2"/>
</dbReference>
<dbReference type="RefSeq" id="XP_063139228.1">
    <molecule id="P63016-1"/>
    <property type="nucleotide sequence ID" value="XM_063283158.1"/>
</dbReference>
<dbReference type="SMR" id="P63016"/>
<dbReference type="BioGRID" id="247541">
    <property type="interactions" value="1"/>
</dbReference>
<dbReference type="FunCoup" id="P63016">
    <property type="interactions" value="1613"/>
</dbReference>
<dbReference type="STRING" id="10116.ENSRNOP00000071013"/>
<dbReference type="PhosphoSitePlus" id="P63016"/>
<dbReference type="PaxDb" id="10116-ENSRNOP00000006302"/>
<dbReference type="Ensembl" id="ENSRNOT00000005882.6">
    <molecule id="P63016-1"/>
    <property type="protein sequence ID" value="ENSRNOP00000005882.3"/>
    <property type="gene ID" value="ENSRNOG00000004410.9"/>
</dbReference>
<dbReference type="Ensembl" id="ENSRNOT00000089525.2">
    <molecule id="P63016-2"/>
    <property type="protein sequence ID" value="ENSRNOP00000071013.2"/>
    <property type="gene ID" value="ENSRNOG00000004410.9"/>
</dbReference>
<dbReference type="GeneID" id="25509"/>
<dbReference type="KEGG" id="rno:25509"/>
<dbReference type="UCSC" id="RGD:3258">
    <molecule id="P63016-1"/>
    <property type="organism name" value="rat"/>
</dbReference>
<dbReference type="AGR" id="RGD:3258"/>
<dbReference type="CTD" id="5080"/>
<dbReference type="RGD" id="3258">
    <property type="gene designation" value="Pax6"/>
</dbReference>
<dbReference type="eggNOG" id="KOG0849">
    <property type="taxonomic scope" value="Eukaryota"/>
</dbReference>
<dbReference type="GeneTree" id="ENSGT00940000155391"/>
<dbReference type="InParanoid" id="P63016"/>
<dbReference type="PhylomeDB" id="P63016"/>
<dbReference type="TreeFam" id="TF320146"/>
<dbReference type="PRO" id="PR:P63016"/>
<dbReference type="Proteomes" id="UP000002494">
    <property type="component" value="Chromosome 3"/>
</dbReference>
<dbReference type="Bgee" id="ENSRNOG00000004410">
    <property type="expression patterns" value="Expressed in cerebellum and 8 other cell types or tissues"/>
</dbReference>
<dbReference type="ExpressionAtlas" id="P63016">
    <property type="expression patterns" value="baseline and differential"/>
</dbReference>
<dbReference type="GO" id="GO:0000785">
    <property type="term" value="C:chromatin"/>
    <property type="evidence" value="ECO:0000314"/>
    <property type="project" value="BHF-UCL"/>
</dbReference>
<dbReference type="GO" id="GO:0005737">
    <property type="term" value="C:cytoplasm"/>
    <property type="evidence" value="ECO:0000266"/>
    <property type="project" value="RGD"/>
</dbReference>
<dbReference type="GO" id="GO:0005634">
    <property type="term" value="C:nucleus"/>
    <property type="evidence" value="ECO:0000266"/>
    <property type="project" value="RGD"/>
</dbReference>
<dbReference type="GO" id="GO:0003682">
    <property type="term" value="F:chromatin binding"/>
    <property type="evidence" value="ECO:0000266"/>
    <property type="project" value="RGD"/>
</dbReference>
<dbReference type="GO" id="GO:0031490">
    <property type="term" value="F:chromatin DNA binding"/>
    <property type="evidence" value="ECO:0000266"/>
    <property type="project" value="RGD"/>
</dbReference>
<dbReference type="GO" id="GO:0070410">
    <property type="term" value="F:co-SMAD binding"/>
    <property type="evidence" value="ECO:0000266"/>
    <property type="project" value="RGD"/>
</dbReference>
<dbReference type="GO" id="GO:0003677">
    <property type="term" value="F:DNA binding"/>
    <property type="evidence" value="ECO:0000266"/>
    <property type="project" value="RGD"/>
</dbReference>
<dbReference type="GO" id="GO:0001228">
    <property type="term" value="F:DNA-binding transcription activator activity, RNA polymerase II-specific"/>
    <property type="evidence" value="ECO:0000266"/>
    <property type="project" value="RGD"/>
</dbReference>
<dbReference type="GO" id="GO:0003700">
    <property type="term" value="F:DNA-binding transcription factor activity"/>
    <property type="evidence" value="ECO:0000266"/>
    <property type="project" value="RGD"/>
</dbReference>
<dbReference type="GO" id="GO:0000981">
    <property type="term" value="F:DNA-binding transcription factor activity, RNA polymerase II-specific"/>
    <property type="evidence" value="ECO:0000314"/>
    <property type="project" value="BHF-UCL"/>
</dbReference>
<dbReference type="GO" id="GO:0001227">
    <property type="term" value="F:DNA-binding transcription repressor activity, RNA polymerase II-specific"/>
    <property type="evidence" value="ECO:0000266"/>
    <property type="project" value="RGD"/>
</dbReference>
<dbReference type="GO" id="GO:0003690">
    <property type="term" value="F:double-stranded DNA binding"/>
    <property type="evidence" value="ECO:0000314"/>
    <property type="project" value="RGD"/>
</dbReference>
<dbReference type="GO" id="GO:0035035">
    <property type="term" value="F:histone acetyltransferase binding"/>
    <property type="evidence" value="ECO:0000266"/>
    <property type="project" value="RGD"/>
</dbReference>
<dbReference type="GO" id="GO:0071837">
    <property type="term" value="F:HMG box domain binding"/>
    <property type="evidence" value="ECO:0000266"/>
    <property type="project" value="RGD"/>
</dbReference>
<dbReference type="GO" id="GO:0003680">
    <property type="term" value="F:minor groove of adenine-thymine-rich DNA binding"/>
    <property type="evidence" value="ECO:0000314"/>
    <property type="project" value="RGD"/>
</dbReference>
<dbReference type="GO" id="GO:0019901">
    <property type="term" value="F:protein kinase binding"/>
    <property type="evidence" value="ECO:0000266"/>
    <property type="project" value="RGD"/>
</dbReference>
<dbReference type="GO" id="GO:0070412">
    <property type="term" value="F:R-SMAD binding"/>
    <property type="evidence" value="ECO:0000266"/>
    <property type="project" value="RGD"/>
</dbReference>
<dbReference type="GO" id="GO:0003723">
    <property type="term" value="F:RNA binding"/>
    <property type="evidence" value="ECO:0000266"/>
    <property type="project" value="RGD"/>
</dbReference>
<dbReference type="GO" id="GO:0000978">
    <property type="term" value="F:RNA polymerase II cis-regulatory region sequence-specific DNA binding"/>
    <property type="evidence" value="ECO:0000314"/>
    <property type="project" value="BHF-UCL"/>
</dbReference>
<dbReference type="GO" id="GO:0000979">
    <property type="term" value="F:RNA polymerase II core promoter sequence-specific DNA binding"/>
    <property type="evidence" value="ECO:0000266"/>
    <property type="project" value="RGD"/>
</dbReference>
<dbReference type="GO" id="GO:0043565">
    <property type="term" value="F:sequence-specific DNA binding"/>
    <property type="evidence" value="ECO:0000314"/>
    <property type="project" value="RGD"/>
</dbReference>
<dbReference type="GO" id="GO:1990837">
    <property type="term" value="F:sequence-specific double-stranded DNA binding"/>
    <property type="evidence" value="ECO:0000266"/>
    <property type="project" value="RGD"/>
</dbReference>
<dbReference type="GO" id="GO:0000976">
    <property type="term" value="F:transcription cis-regulatory region binding"/>
    <property type="evidence" value="ECO:0000250"/>
    <property type="project" value="UniProtKB"/>
</dbReference>
<dbReference type="GO" id="GO:0001221">
    <property type="term" value="F:transcription coregulator binding"/>
    <property type="evidence" value="ECO:0000266"/>
    <property type="project" value="RGD"/>
</dbReference>
<dbReference type="GO" id="GO:0031625">
    <property type="term" value="F:ubiquitin protein ligase binding"/>
    <property type="evidence" value="ECO:0000266"/>
    <property type="project" value="RGD"/>
</dbReference>
<dbReference type="GO" id="GO:0009952">
    <property type="term" value="P:anterior/posterior pattern specification"/>
    <property type="evidence" value="ECO:0000266"/>
    <property type="project" value="RGD"/>
</dbReference>
<dbReference type="GO" id="GO:0048708">
    <property type="term" value="P:astrocyte differentiation"/>
    <property type="evidence" value="ECO:0000315"/>
    <property type="project" value="RGD"/>
</dbReference>
<dbReference type="GO" id="GO:0007411">
    <property type="term" value="P:axon guidance"/>
    <property type="evidence" value="ECO:0000266"/>
    <property type="project" value="RGD"/>
</dbReference>
<dbReference type="GO" id="GO:0007409">
    <property type="term" value="P:axonogenesis"/>
    <property type="evidence" value="ECO:0000266"/>
    <property type="project" value="RGD"/>
</dbReference>
<dbReference type="GO" id="GO:0001568">
    <property type="term" value="P:blood vessel development"/>
    <property type="evidence" value="ECO:0000266"/>
    <property type="project" value="RGD"/>
</dbReference>
<dbReference type="GO" id="GO:0007420">
    <property type="term" value="P:brain development"/>
    <property type="evidence" value="ECO:0000266"/>
    <property type="project" value="RGD"/>
</dbReference>
<dbReference type="GO" id="GO:0043010">
    <property type="term" value="P:camera-type eye development"/>
    <property type="evidence" value="ECO:0000266"/>
    <property type="project" value="RGD"/>
</dbReference>
<dbReference type="GO" id="GO:0030154">
    <property type="term" value="P:cell differentiation"/>
    <property type="evidence" value="ECO:0000266"/>
    <property type="project" value="RGD"/>
</dbReference>
<dbReference type="GO" id="GO:0045165">
    <property type="term" value="P:cell fate commitment"/>
    <property type="evidence" value="ECO:0000266"/>
    <property type="project" value="RGD"/>
</dbReference>
<dbReference type="GO" id="GO:0001709">
    <property type="term" value="P:cell fate determination"/>
    <property type="evidence" value="ECO:0000266"/>
    <property type="project" value="RGD"/>
</dbReference>
<dbReference type="GO" id="GO:0008283">
    <property type="term" value="P:cell population proliferation"/>
    <property type="evidence" value="ECO:0000266"/>
    <property type="project" value="RGD"/>
</dbReference>
<dbReference type="GO" id="GO:0044344">
    <property type="term" value="P:cellular response to fibroblast growth factor stimulus"/>
    <property type="evidence" value="ECO:0000270"/>
    <property type="project" value="RGD"/>
</dbReference>
<dbReference type="GO" id="GO:0071333">
    <property type="term" value="P:cellular response to glucose stimulus"/>
    <property type="evidence" value="ECO:0000270"/>
    <property type="project" value="RGD"/>
</dbReference>
<dbReference type="GO" id="GO:0032869">
    <property type="term" value="P:cellular response to insulin stimulus"/>
    <property type="evidence" value="ECO:0000270"/>
    <property type="project" value="RGD"/>
</dbReference>
<dbReference type="GO" id="GO:1990830">
    <property type="term" value="P:cellular response to leukemia inhibitory factor"/>
    <property type="evidence" value="ECO:0000266"/>
    <property type="project" value="RGD"/>
</dbReference>
<dbReference type="GO" id="GO:0071380">
    <property type="term" value="P:cellular response to prostaglandin E stimulus"/>
    <property type="evidence" value="ECO:0000270"/>
    <property type="project" value="RGD"/>
</dbReference>
<dbReference type="GO" id="GO:0071466">
    <property type="term" value="P:cellular response to xenobiotic stimulus"/>
    <property type="evidence" value="ECO:0000270"/>
    <property type="project" value="RGD"/>
</dbReference>
<dbReference type="GO" id="GO:0021549">
    <property type="term" value="P:cerebellum development"/>
    <property type="evidence" value="ECO:0000270"/>
    <property type="project" value="RGD"/>
</dbReference>
<dbReference type="GO" id="GO:0021987">
    <property type="term" value="P:cerebral cortex development"/>
    <property type="evidence" value="ECO:0000266"/>
    <property type="project" value="RGD"/>
</dbReference>
<dbReference type="GO" id="GO:0021796">
    <property type="term" value="P:cerebral cortex regionalization"/>
    <property type="evidence" value="ECO:0000266"/>
    <property type="project" value="RGD"/>
</dbReference>
<dbReference type="GO" id="GO:0006338">
    <property type="term" value="P:chromatin remodeling"/>
    <property type="evidence" value="ECO:0000266"/>
    <property type="project" value="RGD"/>
</dbReference>
<dbReference type="GO" id="GO:0021902">
    <property type="term" value="P:commitment of neuronal cell to specific neuron type in forebrain"/>
    <property type="evidence" value="ECO:0000266"/>
    <property type="project" value="RGD"/>
</dbReference>
<dbReference type="GO" id="GO:0061303">
    <property type="term" value="P:cornea development in camera-type eye"/>
    <property type="evidence" value="ECO:0000266"/>
    <property type="project" value="RGD"/>
</dbReference>
<dbReference type="GO" id="GO:0009950">
    <property type="term" value="P:dorsal/ventral axis specification"/>
    <property type="evidence" value="ECO:0000266"/>
    <property type="project" value="RGD"/>
</dbReference>
<dbReference type="GO" id="GO:0009953">
    <property type="term" value="P:dorsal/ventral pattern formation"/>
    <property type="evidence" value="ECO:0000266"/>
    <property type="project" value="RGD"/>
</dbReference>
<dbReference type="GO" id="GO:0048596">
    <property type="term" value="P:embryonic camera-type eye morphogenesis"/>
    <property type="evidence" value="ECO:0000266"/>
    <property type="project" value="RGD"/>
</dbReference>
<dbReference type="GO" id="GO:0002064">
    <property type="term" value="P:epithelial cell development"/>
    <property type="evidence" value="ECO:0000315"/>
    <property type="project" value="RGD"/>
</dbReference>
<dbReference type="GO" id="GO:0000132">
    <property type="term" value="P:establishment of mitotic spindle orientation"/>
    <property type="evidence" value="ECO:0000266"/>
    <property type="project" value="RGD"/>
</dbReference>
<dbReference type="GO" id="GO:0042462">
    <property type="term" value="P:eye photoreceptor cell development"/>
    <property type="evidence" value="ECO:0000266"/>
    <property type="project" value="RGD"/>
</dbReference>
<dbReference type="GO" id="GO:0030900">
    <property type="term" value="P:forebrain development"/>
    <property type="evidence" value="ECO:0000266"/>
    <property type="project" value="RGD"/>
</dbReference>
<dbReference type="GO" id="GO:0021798">
    <property type="term" value="P:forebrain dorsal/ventral pattern formation"/>
    <property type="evidence" value="ECO:0000266"/>
    <property type="project" value="RGD"/>
</dbReference>
<dbReference type="GO" id="GO:0021905">
    <property type="term" value="P:forebrain-midbrain boundary formation"/>
    <property type="evidence" value="ECO:0000266"/>
    <property type="project" value="RGD"/>
</dbReference>
<dbReference type="GO" id="GO:0010467">
    <property type="term" value="P:gene expression"/>
    <property type="evidence" value="ECO:0000266"/>
    <property type="project" value="RGD"/>
</dbReference>
<dbReference type="GO" id="GO:0002067">
    <property type="term" value="P:glandular epithelial cell differentiation"/>
    <property type="evidence" value="ECO:0000266"/>
    <property type="project" value="RGD"/>
</dbReference>
<dbReference type="GO" id="GO:0042593">
    <property type="term" value="P:glucose homeostasis"/>
    <property type="evidence" value="ECO:0000266"/>
    <property type="project" value="RGD"/>
</dbReference>
<dbReference type="GO" id="GO:0021986">
    <property type="term" value="P:habenula development"/>
    <property type="evidence" value="ECO:0000266"/>
    <property type="project" value="RGD"/>
</dbReference>
<dbReference type="GO" id="GO:0030902">
    <property type="term" value="P:hindbrain development"/>
    <property type="evidence" value="ECO:0000314"/>
    <property type="project" value="RGD"/>
</dbReference>
<dbReference type="GO" id="GO:1901142">
    <property type="term" value="P:insulin metabolic process"/>
    <property type="evidence" value="ECO:0000315"/>
    <property type="project" value="RGD"/>
</dbReference>
<dbReference type="GO" id="GO:0022027">
    <property type="term" value="P:interkinetic nuclear migration"/>
    <property type="evidence" value="ECO:0000315"/>
    <property type="project" value="RGD"/>
</dbReference>
<dbReference type="GO" id="GO:0061072">
    <property type="term" value="P:iris morphogenesis"/>
    <property type="evidence" value="ECO:0000266"/>
    <property type="project" value="RGD"/>
</dbReference>
<dbReference type="GO" id="GO:0030216">
    <property type="term" value="P:keratinocyte differentiation"/>
    <property type="evidence" value="ECO:0000266"/>
    <property type="project" value="RGD"/>
</dbReference>
<dbReference type="GO" id="GO:0032808">
    <property type="term" value="P:lacrimal gland development"/>
    <property type="evidence" value="ECO:0000266"/>
    <property type="project" value="RGD"/>
</dbReference>
<dbReference type="GO" id="GO:0098598">
    <property type="term" value="P:learned vocalization behavior or vocal learning"/>
    <property type="evidence" value="ECO:0000315"/>
    <property type="project" value="RGD"/>
</dbReference>
<dbReference type="GO" id="GO:0002088">
    <property type="term" value="P:lens development in camera-type eye"/>
    <property type="evidence" value="ECO:0000266"/>
    <property type="project" value="RGD"/>
</dbReference>
<dbReference type="GO" id="GO:0050680">
    <property type="term" value="P:negative regulation of epithelial cell proliferation"/>
    <property type="evidence" value="ECO:0000266"/>
    <property type="project" value="RGD"/>
</dbReference>
<dbReference type="GO" id="GO:2000178">
    <property type="term" value="P:negative regulation of neural precursor cell proliferation"/>
    <property type="evidence" value="ECO:0000266"/>
    <property type="project" value="RGD"/>
</dbReference>
<dbReference type="GO" id="GO:0007406">
    <property type="term" value="P:negative regulation of neuroblast proliferation"/>
    <property type="evidence" value="ECO:0000266"/>
    <property type="project" value="RGD"/>
</dbReference>
<dbReference type="GO" id="GO:0045665">
    <property type="term" value="P:negative regulation of neuron differentiation"/>
    <property type="evidence" value="ECO:0000266"/>
    <property type="project" value="RGD"/>
</dbReference>
<dbReference type="GO" id="GO:0000122">
    <property type="term" value="P:negative regulation of transcription by RNA polymerase II"/>
    <property type="evidence" value="ECO:0000250"/>
    <property type="project" value="UniProtKB"/>
</dbReference>
<dbReference type="GO" id="GO:0007399">
    <property type="term" value="P:nervous system development"/>
    <property type="evidence" value="ECO:0000266"/>
    <property type="project" value="RGD"/>
</dbReference>
<dbReference type="GO" id="GO:0001755">
    <property type="term" value="P:neural crest cell migration"/>
    <property type="evidence" value="ECO:0000315"/>
    <property type="project" value="RGD"/>
</dbReference>
<dbReference type="GO" id="GO:0061351">
    <property type="term" value="P:neural precursor cell proliferation"/>
    <property type="evidence" value="ECO:0000315"/>
    <property type="project" value="RGD"/>
</dbReference>
<dbReference type="GO" id="GO:0007405">
    <property type="term" value="P:neuroblast proliferation"/>
    <property type="evidence" value="ECO:0000266"/>
    <property type="project" value="RGD"/>
</dbReference>
<dbReference type="GO" id="GO:0030182">
    <property type="term" value="P:neuron differentiation"/>
    <property type="evidence" value="ECO:0000266"/>
    <property type="project" value="RGD"/>
</dbReference>
<dbReference type="GO" id="GO:0001764">
    <property type="term" value="P:neuron migration"/>
    <property type="evidence" value="ECO:0000315"/>
    <property type="project" value="RGD"/>
</dbReference>
<dbReference type="GO" id="GO:0021772">
    <property type="term" value="P:olfactory bulb development"/>
    <property type="evidence" value="ECO:0000315"/>
    <property type="project" value="RGD"/>
</dbReference>
<dbReference type="GO" id="GO:0061034">
    <property type="term" value="P:olfactory bulb mitral cell layer development"/>
    <property type="evidence" value="ECO:0000315"/>
    <property type="project" value="RGD"/>
</dbReference>
<dbReference type="GO" id="GO:0021778">
    <property type="term" value="P:oligodendrocyte cell fate specification"/>
    <property type="evidence" value="ECO:0000266"/>
    <property type="project" value="RGD"/>
</dbReference>
<dbReference type="GO" id="GO:0021543">
    <property type="term" value="P:pallium development"/>
    <property type="evidence" value="ECO:0000266"/>
    <property type="project" value="RGD"/>
</dbReference>
<dbReference type="GO" id="GO:0003322">
    <property type="term" value="P:pancreatic A cell development"/>
    <property type="evidence" value="ECO:0000315"/>
    <property type="project" value="BHF-UCL"/>
</dbReference>
<dbReference type="GO" id="GO:0003310">
    <property type="term" value="P:pancreatic A cell differentiation"/>
    <property type="evidence" value="ECO:0000315"/>
    <property type="project" value="RGD"/>
</dbReference>
<dbReference type="GO" id="GO:0021983">
    <property type="term" value="P:pituitary gland development"/>
    <property type="evidence" value="ECO:0000266"/>
    <property type="project" value="RGD"/>
</dbReference>
<dbReference type="GO" id="GO:0042660">
    <property type="term" value="P:positive regulation of cell fate specification"/>
    <property type="evidence" value="ECO:0000315"/>
    <property type="project" value="RGD"/>
</dbReference>
<dbReference type="GO" id="GO:0045893">
    <property type="term" value="P:positive regulation of DNA-templated transcription"/>
    <property type="evidence" value="ECO:0000250"/>
    <property type="project" value="UniProtKB"/>
</dbReference>
<dbReference type="GO" id="GO:0030858">
    <property type="term" value="P:positive regulation of epithelial cell differentiation"/>
    <property type="evidence" value="ECO:0000266"/>
    <property type="project" value="RGD"/>
</dbReference>
<dbReference type="GO" id="GO:0010628">
    <property type="term" value="P:positive regulation of gene expression"/>
    <property type="evidence" value="ECO:0000315"/>
    <property type="project" value="BHF-UCL"/>
</dbReference>
<dbReference type="GO" id="GO:0120008">
    <property type="term" value="P:positive regulation of glutamatergic neuron differentiation"/>
    <property type="evidence" value="ECO:0000315"/>
    <property type="project" value="RGD"/>
</dbReference>
<dbReference type="GO" id="GO:1902895">
    <property type="term" value="P:positive regulation of miRNA transcription"/>
    <property type="evidence" value="ECO:0000266"/>
    <property type="project" value="RGD"/>
</dbReference>
<dbReference type="GO" id="GO:0002052">
    <property type="term" value="P:positive regulation of neuroblast proliferation"/>
    <property type="evidence" value="ECO:0000266"/>
    <property type="project" value="RGD"/>
</dbReference>
<dbReference type="GO" id="GO:2001224">
    <property type="term" value="P:positive regulation of neuron migration"/>
    <property type="evidence" value="ECO:0000316"/>
    <property type="project" value="RGD"/>
</dbReference>
<dbReference type="GO" id="GO:0045944">
    <property type="term" value="P:positive regulation of transcription by RNA polymerase II"/>
    <property type="evidence" value="ECO:0000315"/>
    <property type="project" value="BHF-UCL"/>
</dbReference>
<dbReference type="GO" id="GO:0033365">
    <property type="term" value="P:protein localization to organelle"/>
    <property type="evidence" value="ECO:0000266"/>
    <property type="project" value="RGD"/>
</dbReference>
<dbReference type="GO" id="GO:0003002">
    <property type="term" value="P:regionalization"/>
    <property type="evidence" value="ECO:0000266"/>
    <property type="project" value="RGD"/>
</dbReference>
<dbReference type="GO" id="GO:0009786">
    <property type="term" value="P:regulation of asymmetric cell division"/>
    <property type="evidence" value="ECO:0000266"/>
    <property type="project" value="RGD"/>
</dbReference>
<dbReference type="GO" id="GO:0030334">
    <property type="term" value="P:regulation of cell migration"/>
    <property type="evidence" value="ECO:0000266"/>
    <property type="project" value="RGD"/>
</dbReference>
<dbReference type="GO" id="GO:0010468">
    <property type="term" value="P:regulation of gene expression"/>
    <property type="evidence" value="ECO:0000266"/>
    <property type="project" value="RGD"/>
</dbReference>
<dbReference type="GO" id="GO:0050767">
    <property type="term" value="P:regulation of neurogenesis"/>
    <property type="evidence" value="ECO:0000315"/>
    <property type="project" value="RGD"/>
</dbReference>
<dbReference type="GO" id="GO:0045664">
    <property type="term" value="P:regulation of neuron differentiation"/>
    <property type="evidence" value="ECO:0000314"/>
    <property type="project" value="RGD"/>
</dbReference>
<dbReference type="GO" id="GO:0010975">
    <property type="term" value="P:regulation of neuron projection development"/>
    <property type="evidence" value="ECO:0000316"/>
    <property type="project" value="RGD"/>
</dbReference>
<dbReference type="GO" id="GO:0048505">
    <property type="term" value="P:regulation of timing of cell differentiation"/>
    <property type="evidence" value="ECO:0000266"/>
    <property type="project" value="RGD"/>
</dbReference>
<dbReference type="GO" id="GO:0006357">
    <property type="term" value="P:regulation of transcription by RNA polymerase II"/>
    <property type="evidence" value="ECO:0000266"/>
    <property type="project" value="RGD"/>
</dbReference>
<dbReference type="GO" id="GO:0045471">
    <property type="term" value="P:response to ethanol"/>
    <property type="evidence" value="ECO:0000270"/>
    <property type="project" value="RGD"/>
</dbReference>
<dbReference type="GO" id="GO:0009611">
    <property type="term" value="P:response to wounding"/>
    <property type="evidence" value="ECO:0000266"/>
    <property type="project" value="RGD"/>
</dbReference>
<dbReference type="GO" id="GO:0060041">
    <property type="term" value="P:retina development in camera-type eye"/>
    <property type="evidence" value="ECO:0000270"/>
    <property type="project" value="RGD"/>
</dbReference>
<dbReference type="GO" id="GO:0021593">
    <property type="term" value="P:rhombomere morphogenesis"/>
    <property type="evidence" value="ECO:0000315"/>
    <property type="project" value="RGD"/>
</dbReference>
<dbReference type="GO" id="GO:0007435">
    <property type="term" value="P:salivary gland morphogenesis"/>
    <property type="evidence" value="ECO:0000266"/>
    <property type="project" value="RGD"/>
</dbReference>
<dbReference type="GO" id="GO:1904937">
    <property type="term" value="P:sensory neuron migration"/>
    <property type="evidence" value="ECO:0000315"/>
    <property type="project" value="RGD"/>
</dbReference>
<dbReference type="GO" id="GO:0007423">
    <property type="term" value="P:sensory organ development"/>
    <property type="evidence" value="ECO:0000318"/>
    <property type="project" value="GO_Central"/>
</dbReference>
<dbReference type="GO" id="GO:0023019">
    <property type="term" value="P:signal transduction involved in regulation of gene expression"/>
    <property type="evidence" value="ECO:0000266"/>
    <property type="project" value="RGD"/>
</dbReference>
<dbReference type="GO" id="GO:0007224">
    <property type="term" value="P:smoothened signaling pathway"/>
    <property type="evidence" value="ECO:0000266"/>
    <property type="project" value="RGD"/>
</dbReference>
<dbReference type="GO" id="GO:0021510">
    <property type="term" value="P:spinal cord development"/>
    <property type="evidence" value="ECO:0000270"/>
    <property type="project" value="RGD"/>
</dbReference>
<dbReference type="GO" id="GO:0021978">
    <property type="term" value="P:telencephalon regionalization"/>
    <property type="evidence" value="ECO:0000266"/>
    <property type="project" value="RGD"/>
</dbReference>
<dbReference type="GO" id="GO:0006366">
    <property type="term" value="P:transcription by RNA polymerase II"/>
    <property type="evidence" value="ECO:0000266"/>
    <property type="project" value="RGD"/>
</dbReference>
<dbReference type="GO" id="GO:0003309">
    <property type="term" value="P:type B pancreatic cell differentiation"/>
    <property type="evidence" value="ECO:0000315"/>
    <property type="project" value="RGD"/>
</dbReference>
<dbReference type="GO" id="GO:0021517">
    <property type="term" value="P:ventral spinal cord development"/>
    <property type="evidence" value="ECO:0000266"/>
    <property type="project" value="RGD"/>
</dbReference>
<dbReference type="CDD" id="cd00086">
    <property type="entry name" value="homeodomain"/>
    <property type="match status" value="1"/>
</dbReference>
<dbReference type="CDD" id="cd00131">
    <property type="entry name" value="PAX"/>
    <property type="match status" value="1"/>
</dbReference>
<dbReference type="FunFam" id="1.10.10.10:FF:000003">
    <property type="entry name" value="Paired box protein Pax-6"/>
    <property type="match status" value="1"/>
</dbReference>
<dbReference type="FunFam" id="1.10.10.10:FF:000069">
    <property type="entry name" value="Paired box protein Pax-6"/>
    <property type="match status" value="1"/>
</dbReference>
<dbReference type="FunFam" id="1.10.10.60:FF:000028">
    <property type="entry name" value="Paired box protein Pax-6"/>
    <property type="match status" value="1"/>
</dbReference>
<dbReference type="Gene3D" id="1.10.10.60">
    <property type="entry name" value="Homeodomain-like"/>
    <property type="match status" value="1"/>
</dbReference>
<dbReference type="Gene3D" id="1.10.10.10">
    <property type="entry name" value="Winged helix-like DNA-binding domain superfamily/Winged helix DNA-binding domain"/>
    <property type="match status" value="2"/>
</dbReference>
<dbReference type="InterPro" id="IPR001356">
    <property type="entry name" value="HD"/>
</dbReference>
<dbReference type="InterPro" id="IPR017970">
    <property type="entry name" value="Homeobox_CS"/>
</dbReference>
<dbReference type="InterPro" id="IPR009057">
    <property type="entry name" value="Homeodomain-like_sf"/>
</dbReference>
<dbReference type="InterPro" id="IPR043182">
    <property type="entry name" value="PAIRED_DNA-bd_dom"/>
</dbReference>
<dbReference type="InterPro" id="IPR001523">
    <property type="entry name" value="Paired_dom"/>
</dbReference>
<dbReference type="InterPro" id="IPR043565">
    <property type="entry name" value="PAX_fam"/>
</dbReference>
<dbReference type="InterPro" id="IPR036388">
    <property type="entry name" value="WH-like_DNA-bd_sf"/>
</dbReference>
<dbReference type="PANTHER" id="PTHR45636:SF48">
    <property type="entry name" value="PAIRED BOX PROTEIN PAX-6"/>
    <property type="match status" value="1"/>
</dbReference>
<dbReference type="PANTHER" id="PTHR45636">
    <property type="entry name" value="PAIRED BOX PROTEIN PAX-6-RELATED-RELATED"/>
    <property type="match status" value="1"/>
</dbReference>
<dbReference type="Pfam" id="PF00046">
    <property type="entry name" value="Homeodomain"/>
    <property type="match status" value="1"/>
</dbReference>
<dbReference type="Pfam" id="PF00292">
    <property type="entry name" value="PAX"/>
    <property type="match status" value="1"/>
</dbReference>
<dbReference type="PRINTS" id="PR00027">
    <property type="entry name" value="PAIREDBOX"/>
</dbReference>
<dbReference type="SMART" id="SM00389">
    <property type="entry name" value="HOX"/>
    <property type="match status" value="1"/>
</dbReference>
<dbReference type="SMART" id="SM00351">
    <property type="entry name" value="PAX"/>
    <property type="match status" value="1"/>
</dbReference>
<dbReference type="SUPFAM" id="SSF46689">
    <property type="entry name" value="Homeodomain-like"/>
    <property type="match status" value="2"/>
</dbReference>
<dbReference type="PROSITE" id="PS00027">
    <property type="entry name" value="HOMEOBOX_1"/>
    <property type="match status" value="1"/>
</dbReference>
<dbReference type="PROSITE" id="PS50071">
    <property type="entry name" value="HOMEOBOX_2"/>
    <property type="match status" value="1"/>
</dbReference>
<dbReference type="PROSITE" id="PS00034">
    <property type="entry name" value="PAIRED_1"/>
    <property type="match status" value="1"/>
</dbReference>
<dbReference type="PROSITE" id="PS51057">
    <property type="entry name" value="PAIRED_2"/>
    <property type="match status" value="1"/>
</dbReference>
<proteinExistence type="evidence at transcript level"/>
<gene>
    <name type="primary">Pax6</name>
    <name type="synonym">Pax-6</name>
    <name type="synonym">Sey</name>
</gene>
<organism>
    <name type="scientific">Rattus norvegicus</name>
    <name type="common">Rat</name>
    <dbReference type="NCBI Taxonomy" id="10116"/>
    <lineage>
        <taxon>Eukaryota</taxon>
        <taxon>Metazoa</taxon>
        <taxon>Chordata</taxon>
        <taxon>Craniata</taxon>
        <taxon>Vertebrata</taxon>
        <taxon>Euteleostomi</taxon>
        <taxon>Mammalia</taxon>
        <taxon>Eutheria</taxon>
        <taxon>Euarchontoglires</taxon>
        <taxon>Glires</taxon>
        <taxon>Rodentia</taxon>
        <taxon>Myomorpha</taxon>
        <taxon>Muroidea</taxon>
        <taxon>Muridae</taxon>
        <taxon>Murinae</taxon>
        <taxon>Rattus</taxon>
    </lineage>
</organism>
<protein>
    <recommendedName>
        <fullName>Paired box protein Pax-6</fullName>
    </recommendedName>
    <alternativeName>
        <fullName>Oculorhombin</fullName>
    </alternativeName>
</protein>
<evidence type="ECO:0000250" key="1"/>
<evidence type="ECO:0000250" key="2">
    <source>
        <dbReference type="UniProtKB" id="P63015"/>
    </source>
</evidence>
<evidence type="ECO:0000255" key="3">
    <source>
        <dbReference type="PROSITE-ProRule" id="PRU00108"/>
    </source>
</evidence>
<evidence type="ECO:0000255" key="4">
    <source>
        <dbReference type="PROSITE-ProRule" id="PRU00381"/>
    </source>
</evidence>
<evidence type="ECO:0000256" key="5">
    <source>
        <dbReference type="SAM" id="MobiDB-lite"/>
    </source>
</evidence>
<evidence type="ECO:0000269" key="6">
    <source>
    </source>
</evidence>
<evidence type="ECO:0000269" key="7">
    <source>
    </source>
</evidence>
<evidence type="ECO:0000269" key="8">
    <source>
    </source>
</evidence>
<evidence type="ECO:0000269" key="9">
    <source>
    </source>
</evidence>
<evidence type="ECO:0000303" key="10">
    <source>
    </source>
</evidence>
<evidence type="ECO:0000303" key="11">
    <source ref="2"/>
</evidence>
<evidence type="ECO:0000305" key="12"/>